<proteinExistence type="evidence at protein level"/>
<name>RL27A_HUMAN</name>
<sequence length="148" mass="16561">MPSRLRKTRKLRGHVSHGHGRIGKHRKHPGGRGNAGGLHHHRINFDKYHPGYFGKVGMKHYHLKRNQSFCPTVNLDKLWTLVSEQTRVNAAKNKTGAAPIIDVVRSGYYKVLGKGKLPKQPVIVKAKFFSRRAEEKIKSVGGACVLVA</sequence>
<evidence type="ECO:0000256" key="1">
    <source>
        <dbReference type="SAM" id="MobiDB-lite"/>
    </source>
</evidence>
<evidence type="ECO:0000269" key="2">
    <source>
    </source>
</evidence>
<evidence type="ECO:0000269" key="3">
    <source>
    </source>
</evidence>
<evidence type="ECO:0000269" key="4">
    <source>
    </source>
</evidence>
<evidence type="ECO:0000303" key="5">
    <source>
    </source>
</evidence>
<evidence type="ECO:0000305" key="6"/>
<evidence type="ECO:0007744" key="7">
    <source>
        <dbReference type="PDB" id="6LQM"/>
    </source>
</evidence>
<evidence type="ECO:0007744" key="8">
    <source>
        <dbReference type="PDB" id="6LSR"/>
    </source>
</evidence>
<evidence type="ECO:0007744" key="9">
    <source>
        <dbReference type="PDB" id="6LSS"/>
    </source>
</evidence>
<evidence type="ECO:0007744" key="10">
    <source>
        <dbReference type="PDB" id="6LU8"/>
    </source>
</evidence>
<evidence type="ECO:0007744" key="11">
    <source>
    </source>
</evidence>
<evidence type="ECO:0007744" key="12">
    <source>
    </source>
</evidence>
<evidence type="ECO:0007744" key="13">
    <source>
    </source>
</evidence>
<evidence type="ECO:0007744" key="14">
    <source>
    </source>
</evidence>
<keyword id="KW-0002">3D-structure</keyword>
<keyword id="KW-0007">Acetylation</keyword>
<keyword id="KW-0963">Cytoplasm</keyword>
<keyword id="KW-0379">Hydroxylation</keyword>
<keyword id="KW-0597">Phosphoprotein</keyword>
<keyword id="KW-1267">Proteomics identification</keyword>
<keyword id="KW-1185">Reference proteome</keyword>
<keyword id="KW-0687">Ribonucleoprotein</keyword>
<keyword id="KW-0689">Ribosomal protein</keyword>
<reference key="1">
    <citation type="journal article" date="1995" name="Biochim. Biophys. Acta">
        <title>Cloning, sequencing and expression of the L5, L21, L27a, L28, S5, S9, S10 and S29 human ribosomal protein mRNAs.</title>
        <authorList>
            <person name="Frigerio J.-M."/>
            <person name="Dagorn J.-C."/>
            <person name="Iovanna J.L."/>
        </authorList>
    </citation>
    <scope>NUCLEOTIDE SEQUENCE [MRNA]</scope>
    <source>
        <tissue>Colon</tissue>
    </source>
</reference>
<reference key="2">
    <citation type="journal article" date="1999" name="Cytogenet. Cell Genet.">
        <title>Genomic structure and chromosome location of RPL27A/Rpl27a, the genes encoding human and mouse ribosomal protein L27A.</title>
        <authorList>
            <person name="Kusuda J."/>
            <person name="Hirai M."/>
            <person name="Tanuma R."/>
            <person name="Hirata M."/>
            <person name="Hashimoto K."/>
        </authorList>
    </citation>
    <scope>NUCLEOTIDE SEQUENCE [GENOMIC DNA]</scope>
</reference>
<reference key="3">
    <citation type="journal article" date="2004" name="Nat. Genet.">
        <title>Complete sequencing and characterization of 21,243 full-length human cDNAs.</title>
        <authorList>
            <person name="Ota T."/>
            <person name="Suzuki Y."/>
            <person name="Nishikawa T."/>
            <person name="Otsuki T."/>
            <person name="Sugiyama T."/>
            <person name="Irie R."/>
            <person name="Wakamatsu A."/>
            <person name="Hayashi K."/>
            <person name="Sato H."/>
            <person name="Nagai K."/>
            <person name="Kimura K."/>
            <person name="Makita H."/>
            <person name="Sekine M."/>
            <person name="Obayashi M."/>
            <person name="Nishi T."/>
            <person name="Shibahara T."/>
            <person name="Tanaka T."/>
            <person name="Ishii S."/>
            <person name="Yamamoto J."/>
            <person name="Saito K."/>
            <person name="Kawai Y."/>
            <person name="Isono Y."/>
            <person name="Nakamura Y."/>
            <person name="Nagahari K."/>
            <person name="Murakami K."/>
            <person name="Yasuda T."/>
            <person name="Iwayanagi T."/>
            <person name="Wagatsuma M."/>
            <person name="Shiratori A."/>
            <person name="Sudo H."/>
            <person name="Hosoiri T."/>
            <person name="Kaku Y."/>
            <person name="Kodaira H."/>
            <person name="Kondo H."/>
            <person name="Sugawara M."/>
            <person name="Takahashi M."/>
            <person name="Kanda K."/>
            <person name="Yokoi T."/>
            <person name="Furuya T."/>
            <person name="Kikkawa E."/>
            <person name="Omura Y."/>
            <person name="Abe K."/>
            <person name="Kamihara K."/>
            <person name="Katsuta N."/>
            <person name="Sato K."/>
            <person name="Tanikawa M."/>
            <person name="Yamazaki M."/>
            <person name="Ninomiya K."/>
            <person name="Ishibashi T."/>
            <person name="Yamashita H."/>
            <person name="Murakawa K."/>
            <person name="Fujimori K."/>
            <person name="Tanai H."/>
            <person name="Kimata M."/>
            <person name="Watanabe M."/>
            <person name="Hiraoka S."/>
            <person name="Chiba Y."/>
            <person name="Ishida S."/>
            <person name="Ono Y."/>
            <person name="Takiguchi S."/>
            <person name="Watanabe S."/>
            <person name="Yosida M."/>
            <person name="Hotuta T."/>
            <person name="Kusano J."/>
            <person name="Kanehori K."/>
            <person name="Takahashi-Fujii A."/>
            <person name="Hara H."/>
            <person name="Tanase T.-O."/>
            <person name="Nomura Y."/>
            <person name="Togiya S."/>
            <person name="Komai F."/>
            <person name="Hara R."/>
            <person name="Takeuchi K."/>
            <person name="Arita M."/>
            <person name="Imose N."/>
            <person name="Musashino K."/>
            <person name="Yuuki H."/>
            <person name="Oshima A."/>
            <person name="Sasaki N."/>
            <person name="Aotsuka S."/>
            <person name="Yoshikawa Y."/>
            <person name="Matsunawa H."/>
            <person name="Ichihara T."/>
            <person name="Shiohata N."/>
            <person name="Sano S."/>
            <person name="Moriya S."/>
            <person name="Momiyama H."/>
            <person name="Satoh N."/>
            <person name="Takami S."/>
            <person name="Terashima Y."/>
            <person name="Suzuki O."/>
            <person name="Nakagawa S."/>
            <person name="Senoh A."/>
            <person name="Mizoguchi H."/>
            <person name="Goto Y."/>
            <person name="Shimizu F."/>
            <person name="Wakebe H."/>
            <person name="Hishigaki H."/>
            <person name="Watanabe T."/>
            <person name="Sugiyama A."/>
            <person name="Takemoto M."/>
            <person name="Kawakami B."/>
            <person name="Yamazaki M."/>
            <person name="Watanabe K."/>
            <person name="Kumagai A."/>
            <person name="Itakura S."/>
            <person name="Fukuzumi Y."/>
            <person name="Fujimori Y."/>
            <person name="Komiyama M."/>
            <person name="Tashiro H."/>
            <person name="Tanigami A."/>
            <person name="Fujiwara T."/>
            <person name="Ono T."/>
            <person name="Yamada K."/>
            <person name="Fujii Y."/>
            <person name="Ozaki K."/>
            <person name="Hirao M."/>
            <person name="Ohmori Y."/>
            <person name="Kawabata A."/>
            <person name="Hikiji T."/>
            <person name="Kobatake N."/>
            <person name="Inagaki H."/>
            <person name="Ikema Y."/>
            <person name="Okamoto S."/>
            <person name="Okitani R."/>
            <person name="Kawakami T."/>
            <person name="Noguchi S."/>
            <person name="Itoh T."/>
            <person name="Shigeta K."/>
            <person name="Senba T."/>
            <person name="Matsumura K."/>
            <person name="Nakajima Y."/>
            <person name="Mizuno T."/>
            <person name="Morinaga M."/>
            <person name="Sasaki M."/>
            <person name="Togashi T."/>
            <person name="Oyama M."/>
            <person name="Hata H."/>
            <person name="Watanabe M."/>
            <person name="Komatsu T."/>
            <person name="Mizushima-Sugano J."/>
            <person name="Satoh T."/>
            <person name="Shirai Y."/>
            <person name="Takahashi Y."/>
            <person name="Nakagawa K."/>
            <person name="Okumura K."/>
            <person name="Nagase T."/>
            <person name="Nomura N."/>
            <person name="Kikuchi H."/>
            <person name="Masuho Y."/>
            <person name="Yamashita R."/>
            <person name="Nakai K."/>
            <person name="Yada T."/>
            <person name="Nakamura Y."/>
            <person name="Ohara O."/>
            <person name="Isogai T."/>
            <person name="Sugano S."/>
        </authorList>
    </citation>
    <scope>NUCLEOTIDE SEQUENCE [LARGE SCALE MRNA]</scope>
    <source>
        <tissue>Tongue</tissue>
    </source>
</reference>
<reference key="4">
    <citation type="submission" date="2005-09" db="EMBL/GenBank/DDBJ databases">
        <authorList>
            <person name="Mural R.J."/>
            <person name="Istrail S."/>
            <person name="Sutton G.G."/>
            <person name="Florea L."/>
            <person name="Halpern A.L."/>
            <person name="Mobarry C.M."/>
            <person name="Lippert R."/>
            <person name="Walenz B."/>
            <person name="Shatkay H."/>
            <person name="Dew I."/>
            <person name="Miller J.R."/>
            <person name="Flanigan M.J."/>
            <person name="Edwards N.J."/>
            <person name="Bolanos R."/>
            <person name="Fasulo D."/>
            <person name="Halldorsson B.V."/>
            <person name="Hannenhalli S."/>
            <person name="Turner R."/>
            <person name="Yooseph S."/>
            <person name="Lu F."/>
            <person name="Nusskern D.R."/>
            <person name="Shue B.C."/>
            <person name="Zheng X.H."/>
            <person name="Zhong F."/>
            <person name="Delcher A.L."/>
            <person name="Huson D.H."/>
            <person name="Kravitz S.A."/>
            <person name="Mouchard L."/>
            <person name="Reinert K."/>
            <person name="Remington K.A."/>
            <person name="Clark A.G."/>
            <person name="Waterman M.S."/>
            <person name="Eichler E.E."/>
            <person name="Adams M.D."/>
            <person name="Hunkapiller M.W."/>
            <person name="Myers E.W."/>
            <person name="Venter J.C."/>
        </authorList>
    </citation>
    <scope>NUCLEOTIDE SEQUENCE [LARGE SCALE GENOMIC DNA]</scope>
</reference>
<reference key="5">
    <citation type="journal article" date="2004" name="Genome Res.">
        <title>The status, quality, and expansion of the NIH full-length cDNA project: the Mammalian Gene Collection (MGC).</title>
        <authorList>
            <consortium name="The MGC Project Team"/>
        </authorList>
    </citation>
    <scope>NUCLEOTIDE SEQUENCE [LARGE SCALE MRNA]</scope>
    <source>
        <tissue>Kidney</tissue>
        <tissue>Lymph</tissue>
    </source>
</reference>
<reference key="6">
    <citation type="journal article" date="1998" name="Genome Res.">
        <title>A map of 75 human ribosomal protein genes.</title>
        <authorList>
            <person name="Kenmochi N."/>
            <person name="Kawaguchi T."/>
            <person name="Rozen S."/>
            <person name="Davis E."/>
            <person name="Goodman N."/>
            <person name="Hudson T.J."/>
            <person name="Tanaka T."/>
            <person name="Page D.C."/>
        </authorList>
    </citation>
    <scope>NUCLEOTIDE SEQUENCE [GENOMIC DNA] OF 73-106</scope>
</reference>
<reference key="7">
    <citation type="journal article" date="2003" name="Nature">
        <title>Proteomic characterization of the human centrosome by protein correlation profiling.</title>
        <authorList>
            <person name="Andersen J.S."/>
            <person name="Wilkinson C.J."/>
            <person name="Mayor T."/>
            <person name="Mortensen P."/>
            <person name="Nigg E.A."/>
            <person name="Mann M."/>
        </authorList>
    </citation>
    <scope>IDENTIFICATION BY MASS SPECTROMETRY</scope>
    <source>
        <tissue>Lymphoblast</tissue>
    </source>
</reference>
<reference key="8">
    <citation type="journal article" date="2008" name="Mol. Cell">
        <title>Kinase-selective enrichment enables quantitative phosphoproteomics of the kinome across the cell cycle.</title>
        <authorList>
            <person name="Daub H."/>
            <person name="Olsen J.V."/>
            <person name="Bairlein M."/>
            <person name="Gnad F."/>
            <person name="Oppermann F.S."/>
            <person name="Korner R."/>
            <person name="Greff Z."/>
            <person name="Keri G."/>
            <person name="Stemmann O."/>
            <person name="Mann M."/>
        </authorList>
    </citation>
    <scope>PHOSPHORYLATION [LARGE SCALE ANALYSIS] AT SER-68</scope>
    <scope>IDENTIFICATION BY MASS SPECTROMETRY [LARGE SCALE ANALYSIS]</scope>
    <source>
        <tissue>Cervix carcinoma</tissue>
    </source>
</reference>
<reference key="9">
    <citation type="journal article" date="2009" name="Mol. Cell. Proteomics">
        <title>Large-scale proteomics analysis of the human kinome.</title>
        <authorList>
            <person name="Oppermann F.S."/>
            <person name="Gnad F."/>
            <person name="Olsen J.V."/>
            <person name="Hornberger R."/>
            <person name="Greff Z."/>
            <person name="Keri G."/>
            <person name="Mann M."/>
            <person name="Daub H."/>
        </authorList>
    </citation>
    <scope>PHOSPHORYLATION [LARGE SCALE ANALYSIS] AT SER-68</scope>
    <scope>IDENTIFICATION BY MASS SPECTROMETRY [LARGE SCALE ANALYSIS]</scope>
</reference>
<reference key="10">
    <citation type="journal article" date="2009" name="Science">
        <title>Lysine acetylation targets protein complexes and co-regulates major cellular functions.</title>
        <authorList>
            <person name="Choudhary C."/>
            <person name="Kumar C."/>
            <person name="Gnad F."/>
            <person name="Nielsen M.L."/>
            <person name="Rehman M."/>
            <person name="Walther T.C."/>
            <person name="Olsen J.V."/>
            <person name="Mann M."/>
        </authorList>
    </citation>
    <scope>ACETYLATION [LARGE SCALE ANALYSIS] AT LYS-47; LYS-55 AND LYS-110</scope>
    <scope>IDENTIFICATION BY MASS SPECTROMETRY [LARGE SCALE ANALYSIS]</scope>
</reference>
<reference key="11">
    <citation type="journal article" date="2011" name="BMC Syst. Biol.">
        <title>Initial characterization of the human central proteome.</title>
        <authorList>
            <person name="Burkard T.R."/>
            <person name="Planyavsky M."/>
            <person name="Kaupe I."/>
            <person name="Breitwieser F.P."/>
            <person name="Buerckstuemmer T."/>
            <person name="Bennett K.L."/>
            <person name="Superti-Furga G."/>
            <person name="Colinge J."/>
        </authorList>
    </citation>
    <scope>IDENTIFICATION BY MASS SPECTROMETRY [LARGE SCALE ANALYSIS]</scope>
</reference>
<reference key="12">
    <citation type="journal article" date="2012" name="Nat. Chem. Biol.">
        <title>Oxygenase-catalyzed ribosome hydroxylation occurs in prokaryotes and humans.</title>
        <authorList>
            <person name="Ge W."/>
            <person name="Wolf A."/>
            <person name="Feng T."/>
            <person name="Ho C.H."/>
            <person name="Sekirnik R."/>
            <person name="Zayer A."/>
            <person name="Granatino N."/>
            <person name="Cockman M.E."/>
            <person name="Loenarz C."/>
            <person name="Loik N.D."/>
            <person name="Hardy A.P."/>
            <person name="Claridge T.D."/>
            <person name="Hamed R.B."/>
            <person name="Chowdhury R."/>
            <person name="Gong L."/>
            <person name="Robinson C.V."/>
            <person name="Trudgian D.C."/>
            <person name="Jiang M."/>
            <person name="Mackeen M.M."/>
            <person name="McCullagh J.S."/>
            <person name="Gordiyenko Y."/>
            <person name="Thalhammer A."/>
            <person name="Yamamoto A."/>
            <person name="Yang M."/>
            <person name="Liu-Yi P."/>
            <person name="Zhang Z."/>
            <person name="Schmidt-Zachmann M."/>
            <person name="Kessler B.M."/>
            <person name="Ratcliffe P.J."/>
            <person name="Preston G.M."/>
            <person name="Coleman M.L."/>
            <person name="Schofield C.J."/>
        </authorList>
    </citation>
    <scope>HYDROXYLATION AT HIS-39 BY MINA</scope>
</reference>
<reference key="13">
    <citation type="journal article" date="2013" name="J. Proteome Res.">
        <title>Toward a comprehensive characterization of a human cancer cell phosphoproteome.</title>
        <authorList>
            <person name="Zhou H."/>
            <person name="Di Palma S."/>
            <person name="Preisinger C."/>
            <person name="Peng M."/>
            <person name="Polat A.N."/>
            <person name="Heck A.J."/>
            <person name="Mohammed S."/>
        </authorList>
    </citation>
    <scope>PHOSPHORYLATION [LARGE SCALE ANALYSIS] AT SER-68</scope>
    <scope>IDENTIFICATION BY MASS SPECTROMETRY [LARGE SCALE ANALYSIS]</scope>
    <source>
        <tissue>Erythroleukemia</tissue>
    </source>
</reference>
<reference key="14">
    <citation type="journal article" date="2014" name="Curr. Opin. Struct. Biol.">
        <title>A new system for naming ribosomal proteins.</title>
        <authorList>
            <person name="Ban N."/>
            <person name="Beckmann R."/>
            <person name="Cate J.H.D."/>
            <person name="Dinman J.D."/>
            <person name="Dragon F."/>
            <person name="Ellis S.R."/>
            <person name="Lafontaine D.L.J."/>
            <person name="Lindahl L."/>
            <person name="Liljas A."/>
            <person name="Lipton J.M."/>
            <person name="McAlear M.A."/>
            <person name="Moore P.B."/>
            <person name="Noller H.F."/>
            <person name="Ortega J."/>
            <person name="Panse V.G."/>
            <person name="Ramakrishnan V."/>
            <person name="Spahn C.M.T."/>
            <person name="Steitz T.A."/>
            <person name="Tchorzewski M."/>
            <person name="Tollervey D."/>
            <person name="Warren A.J."/>
            <person name="Williamson J.R."/>
            <person name="Wilson D."/>
            <person name="Yonath A."/>
            <person name="Yusupov M."/>
        </authorList>
    </citation>
    <scope>NOMENCLATURE</scope>
</reference>
<reference key="15">
    <citation type="journal article" date="2015" name="Proteomics">
        <title>N-terminome analysis of the human mitochondrial proteome.</title>
        <authorList>
            <person name="Vaca Jacome A.S."/>
            <person name="Rabilloud T."/>
            <person name="Schaeffer-Reiss C."/>
            <person name="Rompais M."/>
            <person name="Ayoub D."/>
            <person name="Lane L."/>
            <person name="Bairoch A."/>
            <person name="Van Dorsselaer A."/>
            <person name="Carapito C."/>
        </authorList>
    </citation>
    <scope>IDENTIFICATION BY MASS SPECTROMETRY [LARGE SCALE ANALYSIS]</scope>
</reference>
<reference key="16">
    <citation type="journal article" date="2013" name="Nature">
        <title>Structures of the human and Drosophila 80S ribosome.</title>
        <authorList>
            <person name="Anger A.M."/>
            <person name="Armache J.P."/>
            <person name="Berninghausen O."/>
            <person name="Habeck M."/>
            <person name="Subklewe M."/>
            <person name="Wilson D.N."/>
            <person name="Beckmann R."/>
        </authorList>
    </citation>
    <scope>STRUCTURE BY ELECTRON MICROSCOPY (5.0 ANGSTROMS)</scope>
    <scope>FUNCTION</scope>
    <scope>SUBUNIT</scope>
    <scope>SUBCELLULAR LOCATION</scope>
</reference>
<reference evidence="7 8 9 10" key="17">
    <citation type="journal article" date="2020" name="Nat. Commun.">
        <title>Structural snapshots of human pre-60S ribosomal particles before and after nuclear export.</title>
        <authorList>
            <person name="Liang X."/>
            <person name="Zuo M.Q."/>
            <person name="Zhang Y."/>
            <person name="Li N."/>
            <person name="Ma C."/>
            <person name="Dong M.Q."/>
            <person name="Gao N."/>
        </authorList>
    </citation>
    <scope>STRUCTURE BY ELECTRON MICROSCOPY (3.09 ANGSTROMS)</scope>
    <scope>FUNCTION</scope>
    <scope>SUBUNIT</scope>
</reference>
<protein>
    <recommendedName>
        <fullName evidence="5">Large ribosomal subunit protein uL15</fullName>
    </recommendedName>
    <alternativeName>
        <fullName>60S ribosomal protein L27a</fullName>
    </alternativeName>
</protein>
<dbReference type="EMBL" id="U14968">
    <property type="protein sequence ID" value="AAA85656.1"/>
    <property type="molecule type" value="mRNA"/>
</dbReference>
<dbReference type="EMBL" id="AB020236">
    <property type="protein sequence ID" value="BAA77361.1"/>
    <property type="molecule type" value="Genomic_DNA"/>
</dbReference>
<dbReference type="EMBL" id="AK311767">
    <property type="protein sequence ID" value="BAG34710.1"/>
    <property type="molecule type" value="mRNA"/>
</dbReference>
<dbReference type="EMBL" id="CH471064">
    <property type="protein sequence ID" value="EAW68619.1"/>
    <property type="molecule type" value="Genomic_DNA"/>
</dbReference>
<dbReference type="EMBL" id="BC005326">
    <property type="protein sequence ID" value="AAH05326.1"/>
    <property type="molecule type" value="mRNA"/>
</dbReference>
<dbReference type="EMBL" id="BC020169">
    <property type="protein sequence ID" value="AAH20169.1"/>
    <property type="molecule type" value="mRNA"/>
</dbReference>
<dbReference type="EMBL" id="AB007178">
    <property type="protein sequence ID" value="BAA25837.1"/>
    <property type="molecule type" value="Genomic_DNA"/>
</dbReference>
<dbReference type="CCDS" id="CCDS7790.1"/>
<dbReference type="PIR" id="S55914">
    <property type="entry name" value="S55914"/>
</dbReference>
<dbReference type="RefSeq" id="NP_000981.1">
    <property type="nucleotide sequence ID" value="NM_000990.5"/>
</dbReference>
<dbReference type="PDB" id="4BXF">
    <property type="method" value="X-ray"/>
    <property type="resolution" value="2.05 A"/>
    <property type="chains" value="C/D=32-50"/>
</dbReference>
<dbReference type="PDB" id="4UG0">
    <property type="method" value="EM"/>
    <property type="chains" value="La=1-148"/>
</dbReference>
<dbReference type="PDB" id="4V6X">
    <property type="method" value="EM"/>
    <property type="resolution" value="5.00 A"/>
    <property type="chains" value="Ca=1-148"/>
</dbReference>
<dbReference type="PDB" id="5AJ0">
    <property type="method" value="EM"/>
    <property type="resolution" value="3.50 A"/>
    <property type="chains" value="Aa=1-148"/>
</dbReference>
<dbReference type="PDB" id="5LKS">
    <property type="method" value="EM"/>
    <property type="resolution" value="3.60 A"/>
    <property type="chains" value="La=1-148"/>
</dbReference>
<dbReference type="PDB" id="5T2C">
    <property type="method" value="EM"/>
    <property type="resolution" value="3.60 A"/>
    <property type="chains" value="U=1-148"/>
</dbReference>
<dbReference type="PDB" id="6IP5">
    <property type="method" value="EM"/>
    <property type="resolution" value="3.90 A"/>
    <property type="chains" value="2U=1-148"/>
</dbReference>
<dbReference type="PDB" id="6IP6">
    <property type="method" value="EM"/>
    <property type="resolution" value="4.50 A"/>
    <property type="chains" value="2U=1-148"/>
</dbReference>
<dbReference type="PDB" id="6IP8">
    <property type="method" value="EM"/>
    <property type="resolution" value="3.90 A"/>
    <property type="chains" value="2U=1-148"/>
</dbReference>
<dbReference type="PDB" id="6LQM">
    <property type="method" value="EM"/>
    <property type="resolution" value="3.09 A"/>
    <property type="chains" value="L=1-148"/>
</dbReference>
<dbReference type="PDB" id="6LSR">
    <property type="method" value="EM"/>
    <property type="resolution" value="3.13 A"/>
    <property type="chains" value="L=1-148"/>
</dbReference>
<dbReference type="PDB" id="6LSS">
    <property type="method" value="EM"/>
    <property type="resolution" value="3.23 A"/>
    <property type="chains" value="L=1-148"/>
</dbReference>
<dbReference type="PDB" id="6LU8">
    <property type="method" value="EM"/>
    <property type="resolution" value="3.13 A"/>
    <property type="chains" value="L=1-148"/>
</dbReference>
<dbReference type="PDB" id="6OLE">
    <property type="method" value="EM"/>
    <property type="resolution" value="3.10 A"/>
    <property type="chains" value="b=2-148"/>
</dbReference>
<dbReference type="PDB" id="6OLF">
    <property type="method" value="EM"/>
    <property type="resolution" value="3.90 A"/>
    <property type="chains" value="b=2-148"/>
</dbReference>
<dbReference type="PDB" id="6OLG">
    <property type="method" value="EM"/>
    <property type="resolution" value="3.40 A"/>
    <property type="chains" value="Aa=2-148"/>
</dbReference>
<dbReference type="PDB" id="6OLI">
    <property type="method" value="EM"/>
    <property type="resolution" value="3.50 A"/>
    <property type="chains" value="b=2-148"/>
</dbReference>
<dbReference type="PDB" id="6OLZ">
    <property type="method" value="EM"/>
    <property type="resolution" value="3.90 A"/>
    <property type="chains" value="Aa=2-148"/>
</dbReference>
<dbReference type="PDB" id="6OM0">
    <property type="method" value="EM"/>
    <property type="resolution" value="3.10 A"/>
    <property type="chains" value="b=2-148"/>
</dbReference>
<dbReference type="PDB" id="6OM7">
    <property type="method" value="EM"/>
    <property type="resolution" value="3.70 A"/>
    <property type="chains" value="b=2-148"/>
</dbReference>
<dbReference type="PDB" id="6QZP">
    <property type="method" value="EM"/>
    <property type="resolution" value="2.90 A"/>
    <property type="chains" value="La=2-148"/>
</dbReference>
<dbReference type="PDB" id="6W6L">
    <property type="method" value="EM"/>
    <property type="resolution" value="3.84 A"/>
    <property type="chains" value="b=1-148"/>
</dbReference>
<dbReference type="PDB" id="6XA1">
    <property type="method" value="EM"/>
    <property type="resolution" value="2.80 A"/>
    <property type="chains" value="La=2-148"/>
</dbReference>
<dbReference type="PDB" id="6Y0G">
    <property type="method" value="EM"/>
    <property type="resolution" value="3.20 A"/>
    <property type="chains" value="La=1-148"/>
</dbReference>
<dbReference type="PDB" id="6Y2L">
    <property type="method" value="EM"/>
    <property type="resolution" value="3.00 A"/>
    <property type="chains" value="La=1-148"/>
</dbReference>
<dbReference type="PDB" id="6Y57">
    <property type="method" value="EM"/>
    <property type="resolution" value="3.50 A"/>
    <property type="chains" value="La=1-148"/>
</dbReference>
<dbReference type="PDB" id="6Y6X">
    <property type="method" value="EM"/>
    <property type="resolution" value="2.80 A"/>
    <property type="chains" value="La=2-148"/>
</dbReference>
<dbReference type="PDB" id="6Z6L">
    <property type="method" value="EM"/>
    <property type="resolution" value="3.00 A"/>
    <property type="chains" value="La=1-148"/>
</dbReference>
<dbReference type="PDB" id="6Z6M">
    <property type="method" value="EM"/>
    <property type="resolution" value="3.10 A"/>
    <property type="chains" value="La=1-148"/>
</dbReference>
<dbReference type="PDB" id="6Z6N">
    <property type="method" value="EM"/>
    <property type="resolution" value="2.90 A"/>
    <property type="chains" value="La=1-148"/>
</dbReference>
<dbReference type="PDB" id="6ZM7">
    <property type="method" value="EM"/>
    <property type="resolution" value="2.70 A"/>
    <property type="chains" value="La=1-148"/>
</dbReference>
<dbReference type="PDB" id="6ZME">
    <property type="method" value="EM"/>
    <property type="resolution" value="3.00 A"/>
    <property type="chains" value="La=1-148"/>
</dbReference>
<dbReference type="PDB" id="6ZMI">
    <property type="method" value="EM"/>
    <property type="resolution" value="2.60 A"/>
    <property type="chains" value="La=1-148"/>
</dbReference>
<dbReference type="PDB" id="6ZMO">
    <property type="method" value="EM"/>
    <property type="resolution" value="3.10 A"/>
    <property type="chains" value="La=1-148"/>
</dbReference>
<dbReference type="PDB" id="7BHP">
    <property type="method" value="EM"/>
    <property type="resolution" value="3.30 A"/>
    <property type="chains" value="La=1-148"/>
</dbReference>
<dbReference type="PDB" id="7F5S">
    <property type="method" value="EM"/>
    <property type="resolution" value="2.72 A"/>
    <property type="chains" value="La=1-148"/>
</dbReference>
<dbReference type="PDB" id="7OW7">
    <property type="method" value="EM"/>
    <property type="resolution" value="2.20 A"/>
    <property type="chains" value="U=1-148"/>
</dbReference>
<dbReference type="PDB" id="7QVP">
    <property type="method" value="EM"/>
    <property type="resolution" value="3.00 A"/>
    <property type="chains" value="La/Ma=1-148"/>
</dbReference>
<dbReference type="PDB" id="7XNY">
    <property type="method" value="EM"/>
    <property type="resolution" value="2.50 A"/>
    <property type="chains" value="La=1-148"/>
</dbReference>
<dbReference type="PDB" id="8A3D">
    <property type="method" value="EM"/>
    <property type="resolution" value="1.67 A"/>
    <property type="chains" value="U=1-148"/>
</dbReference>
<dbReference type="PDB" id="8FKP">
    <property type="method" value="EM"/>
    <property type="resolution" value="2.85 A"/>
    <property type="chains" value="LK=1-148"/>
</dbReference>
<dbReference type="PDB" id="8FKQ">
    <property type="method" value="EM"/>
    <property type="resolution" value="2.76 A"/>
    <property type="chains" value="LK=1-148"/>
</dbReference>
<dbReference type="PDB" id="8FKR">
    <property type="method" value="EM"/>
    <property type="resolution" value="2.89 A"/>
    <property type="chains" value="LK=1-148"/>
</dbReference>
<dbReference type="PDB" id="8FKS">
    <property type="method" value="EM"/>
    <property type="resolution" value="2.88 A"/>
    <property type="chains" value="LK=1-148"/>
</dbReference>
<dbReference type="PDB" id="8FKT">
    <property type="method" value="EM"/>
    <property type="resolution" value="2.81 A"/>
    <property type="chains" value="LK=1-148"/>
</dbReference>
<dbReference type="PDB" id="8FKU">
    <property type="method" value="EM"/>
    <property type="resolution" value="2.82 A"/>
    <property type="chains" value="LK=1-148"/>
</dbReference>
<dbReference type="PDB" id="8FKV">
    <property type="method" value="EM"/>
    <property type="resolution" value="2.47 A"/>
    <property type="chains" value="LK=1-148"/>
</dbReference>
<dbReference type="PDB" id="8FKW">
    <property type="method" value="EM"/>
    <property type="resolution" value="2.50 A"/>
    <property type="chains" value="LK=1-148"/>
</dbReference>
<dbReference type="PDB" id="8FKX">
    <property type="method" value="EM"/>
    <property type="resolution" value="2.59 A"/>
    <property type="chains" value="LK=1-148"/>
</dbReference>
<dbReference type="PDB" id="8FKY">
    <property type="method" value="EM"/>
    <property type="resolution" value="2.67 A"/>
    <property type="chains" value="LK=1-148"/>
</dbReference>
<dbReference type="PDB" id="8FKZ">
    <property type="method" value="EM"/>
    <property type="resolution" value="3.04 A"/>
    <property type="chains" value="LK=1-148"/>
</dbReference>
<dbReference type="PDB" id="8FL2">
    <property type="method" value="EM"/>
    <property type="resolution" value="2.67 A"/>
    <property type="chains" value="LK=1-148"/>
</dbReference>
<dbReference type="PDB" id="8FL3">
    <property type="method" value="EM"/>
    <property type="resolution" value="2.53 A"/>
    <property type="chains" value="LK=1-148"/>
</dbReference>
<dbReference type="PDB" id="8FL4">
    <property type="method" value="EM"/>
    <property type="resolution" value="2.89 A"/>
    <property type="chains" value="LK=1-148"/>
</dbReference>
<dbReference type="PDB" id="8FL6">
    <property type="method" value="EM"/>
    <property type="resolution" value="2.62 A"/>
    <property type="chains" value="LK=1-148"/>
</dbReference>
<dbReference type="PDB" id="8FL7">
    <property type="method" value="EM"/>
    <property type="resolution" value="2.55 A"/>
    <property type="chains" value="LK=1-148"/>
</dbReference>
<dbReference type="PDB" id="8FL9">
    <property type="method" value="EM"/>
    <property type="resolution" value="2.75 A"/>
    <property type="chains" value="LK=1-148"/>
</dbReference>
<dbReference type="PDB" id="8FLA">
    <property type="method" value="EM"/>
    <property type="resolution" value="2.63 A"/>
    <property type="chains" value="LK=1-148"/>
</dbReference>
<dbReference type="PDB" id="8FLB">
    <property type="method" value="EM"/>
    <property type="resolution" value="2.55 A"/>
    <property type="chains" value="LK=1-148"/>
</dbReference>
<dbReference type="PDB" id="8FLC">
    <property type="method" value="EM"/>
    <property type="resolution" value="2.76 A"/>
    <property type="chains" value="LK=1-148"/>
</dbReference>
<dbReference type="PDB" id="8FLD">
    <property type="method" value="EM"/>
    <property type="resolution" value="2.58 A"/>
    <property type="chains" value="LK=1-148"/>
</dbReference>
<dbReference type="PDB" id="8FLE">
    <property type="method" value="EM"/>
    <property type="resolution" value="2.48 A"/>
    <property type="chains" value="LK=1-148"/>
</dbReference>
<dbReference type="PDB" id="8FLF">
    <property type="method" value="EM"/>
    <property type="resolution" value="2.65 A"/>
    <property type="chains" value="LK=1-148"/>
</dbReference>
<dbReference type="PDB" id="8G5Y">
    <property type="method" value="EM"/>
    <property type="resolution" value="2.29 A"/>
    <property type="chains" value="La=1-148"/>
</dbReference>
<dbReference type="PDB" id="8G5Z">
    <property type="method" value="EM"/>
    <property type="resolution" value="2.64 A"/>
    <property type="chains" value="La=2-148"/>
</dbReference>
<dbReference type="PDB" id="8G60">
    <property type="method" value="EM"/>
    <property type="resolution" value="2.54 A"/>
    <property type="chains" value="La=1-148"/>
</dbReference>
<dbReference type="PDB" id="8G61">
    <property type="method" value="EM"/>
    <property type="resolution" value="2.94 A"/>
    <property type="chains" value="La=1-148"/>
</dbReference>
<dbReference type="PDB" id="8G6J">
    <property type="method" value="EM"/>
    <property type="resolution" value="2.80 A"/>
    <property type="chains" value="La=1-148"/>
</dbReference>
<dbReference type="PDB" id="8GLP">
    <property type="method" value="EM"/>
    <property type="resolution" value="1.67 A"/>
    <property type="chains" value="La=1-148"/>
</dbReference>
<dbReference type="PDB" id="8IDT">
    <property type="method" value="EM"/>
    <property type="resolution" value="2.80 A"/>
    <property type="chains" value="L=1-148"/>
</dbReference>
<dbReference type="PDB" id="8IDY">
    <property type="method" value="EM"/>
    <property type="resolution" value="3.00 A"/>
    <property type="chains" value="L=1-148"/>
</dbReference>
<dbReference type="PDB" id="8IE3">
    <property type="method" value="EM"/>
    <property type="resolution" value="3.30 A"/>
    <property type="chains" value="L=1-148"/>
</dbReference>
<dbReference type="PDB" id="8IFD">
    <property type="method" value="EM"/>
    <property type="resolution" value="2.59 A"/>
    <property type="chains" value="2U=1-148"/>
</dbReference>
<dbReference type="PDB" id="8IFE">
    <property type="method" value="EM"/>
    <property type="resolution" value="2.57 A"/>
    <property type="chains" value="2U=1-148"/>
</dbReference>
<dbReference type="PDB" id="8INE">
    <property type="method" value="EM"/>
    <property type="resolution" value="3.20 A"/>
    <property type="chains" value="L=1-148"/>
</dbReference>
<dbReference type="PDB" id="8INF">
    <property type="method" value="EM"/>
    <property type="resolution" value="3.00 A"/>
    <property type="chains" value="L=1-148"/>
</dbReference>
<dbReference type="PDB" id="8INK">
    <property type="method" value="EM"/>
    <property type="resolution" value="3.20 A"/>
    <property type="chains" value="L=1-148"/>
</dbReference>
<dbReference type="PDB" id="8IPD">
    <property type="method" value="EM"/>
    <property type="resolution" value="3.20 A"/>
    <property type="chains" value="L=1-148"/>
</dbReference>
<dbReference type="PDB" id="8IPX">
    <property type="method" value="EM"/>
    <property type="resolution" value="4.30 A"/>
    <property type="chains" value="L=1-148"/>
</dbReference>
<dbReference type="PDB" id="8IPY">
    <property type="method" value="EM"/>
    <property type="resolution" value="3.20 A"/>
    <property type="chains" value="L=1-148"/>
</dbReference>
<dbReference type="PDB" id="8IR1">
    <property type="method" value="EM"/>
    <property type="resolution" value="3.30 A"/>
    <property type="chains" value="L=1-148"/>
</dbReference>
<dbReference type="PDB" id="8IR3">
    <property type="method" value="EM"/>
    <property type="resolution" value="3.50 A"/>
    <property type="chains" value="L=1-148"/>
</dbReference>
<dbReference type="PDB" id="8JDJ">
    <property type="method" value="EM"/>
    <property type="resolution" value="2.50 A"/>
    <property type="chains" value="f=1-148"/>
</dbReference>
<dbReference type="PDB" id="8JDK">
    <property type="method" value="EM"/>
    <property type="resolution" value="2.26 A"/>
    <property type="chains" value="f=1-148"/>
</dbReference>
<dbReference type="PDB" id="8JDL">
    <property type="method" value="EM"/>
    <property type="resolution" value="2.42 A"/>
    <property type="chains" value="f=1-148"/>
</dbReference>
<dbReference type="PDB" id="8JDM">
    <property type="method" value="EM"/>
    <property type="resolution" value="2.67 A"/>
    <property type="chains" value="f=1-148"/>
</dbReference>
<dbReference type="PDB" id="8K2C">
    <property type="method" value="EM"/>
    <property type="resolution" value="2.40 A"/>
    <property type="chains" value="La=1-148"/>
</dbReference>
<dbReference type="PDB" id="8OHD">
    <property type="method" value="EM"/>
    <property type="resolution" value="3.10 A"/>
    <property type="chains" value="La=1-148"/>
</dbReference>
<dbReference type="PDB" id="8OJ0">
    <property type="method" value="EM"/>
    <property type="resolution" value="3.30 A"/>
    <property type="chains" value="La=1-148"/>
</dbReference>
<dbReference type="PDB" id="8OJ5">
    <property type="method" value="EM"/>
    <property type="resolution" value="2.90 A"/>
    <property type="chains" value="La=1-148"/>
</dbReference>
<dbReference type="PDB" id="8OJ8">
    <property type="method" value="EM"/>
    <property type="resolution" value="3.30 A"/>
    <property type="chains" value="La=1-148"/>
</dbReference>
<dbReference type="PDB" id="8QFD">
    <property type="method" value="EM"/>
    <property type="resolution" value="2.20 A"/>
    <property type="chains" value="a=1-148"/>
</dbReference>
<dbReference type="PDB" id="8QOI">
    <property type="method" value="EM"/>
    <property type="resolution" value="1.90 A"/>
    <property type="chains" value="La=1-148"/>
</dbReference>
<dbReference type="PDB" id="8QYX">
    <property type="method" value="EM"/>
    <property type="resolution" value="1.78 A"/>
    <property type="chains" value="U1=1-148"/>
</dbReference>
<dbReference type="PDB" id="8RL2">
    <property type="method" value="EM"/>
    <property type="resolution" value="2.84 A"/>
    <property type="chains" value="La=1-148"/>
</dbReference>
<dbReference type="PDB" id="8UKB">
    <property type="method" value="EM"/>
    <property type="resolution" value="3.05 A"/>
    <property type="chains" value="La=2-148"/>
</dbReference>
<dbReference type="PDB" id="8XSX">
    <property type="method" value="EM"/>
    <property type="resolution" value="2.40 A"/>
    <property type="chains" value="La=1-148"/>
</dbReference>
<dbReference type="PDB" id="8XSY">
    <property type="method" value="EM"/>
    <property type="resolution" value="3.00 A"/>
    <property type="chains" value="La=1-148"/>
</dbReference>
<dbReference type="PDB" id="8XSZ">
    <property type="method" value="EM"/>
    <property type="resolution" value="3.20 A"/>
    <property type="chains" value="La=1-148"/>
</dbReference>
<dbReference type="PDB" id="8Y0W">
    <property type="method" value="EM"/>
    <property type="resolution" value="3.40 A"/>
    <property type="chains" value="La=1-148"/>
</dbReference>
<dbReference type="PDB" id="8Y0X">
    <property type="method" value="EM"/>
    <property type="resolution" value="3.30 A"/>
    <property type="chains" value="La=1-148"/>
</dbReference>
<dbReference type="PDB" id="8YOO">
    <property type="method" value="EM"/>
    <property type="resolution" value="2.00 A"/>
    <property type="chains" value="La=1-148"/>
</dbReference>
<dbReference type="PDB" id="8YOP">
    <property type="method" value="EM"/>
    <property type="resolution" value="2.20 A"/>
    <property type="chains" value="La=1-148"/>
</dbReference>
<dbReference type="PDB" id="9C3H">
    <property type="method" value="EM"/>
    <property type="resolution" value="2.00 A"/>
    <property type="chains" value="La=1-148"/>
</dbReference>
<dbReference type="PDB" id="9G8M">
    <property type="method" value="EM"/>
    <property type="resolution" value="3.30 A"/>
    <property type="chains" value="La=1-148"/>
</dbReference>
<dbReference type="PDB" id="9GMO">
    <property type="method" value="EM"/>
    <property type="resolution" value="2.59 A"/>
    <property type="chains" value="U=1-148"/>
</dbReference>
<dbReference type="PDBsum" id="4BXF"/>
<dbReference type="PDBsum" id="4UG0"/>
<dbReference type="PDBsum" id="4V6X"/>
<dbReference type="PDBsum" id="5AJ0"/>
<dbReference type="PDBsum" id="5LKS"/>
<dbReference type="PDBsum" id="5T2C"/>
<dbReference type="PDBsum" id="6IP5"/>
<dbReference type="PDBsum" id="6IP6"/>
<dbReference type="PDBsum" id="6IP8"/>
<dbReference type="PDBsum" id="6LQM"/>
<dbReference type="PDBsum" id="6LSR"/>
<dbReference type="PDBsum" id="6LSS"/>
<dbReference type="PDBsum" id="6LU8"/>
<dbReference type="PDBsum" id="6OLE"/>
<dbReference type="PDBsum" id="6OLF"/>
<dbReference type="PDBsum" id="6OLG"/>
<dbReference type="PDBsum" id="6OLI"/>
<dbReference type="PDBsum" id="6OLZ"/>
<dbReference type="PDBsum" id="6OM0"/>
<dbReference type="PDBsum" id="6OM7"/>
<dbReference type="PDBsum" id="6QZP"/>
<dbReference type="PDBsum" id="6W6L"/>
<dbReference type="PDBsum" id="6XA1"/>
<dbReference type="PDBsum" id="6Y0G"/>
<dbReference type="PDBsum" id="6Y2L"/>
<dbReference type="PDBsum" id="6Y57"/>
<dbReference type="PDBsum" id="6Y6X"/>
<dbReference type="PDBsum" id="6Z6L"/>
<dbReference type="PDBsum" id="6Z6M"/>
<dbReference type="PDBsum" id="6Z6N"/>
<dbReference type="PDBsum" id="6ZM7"/>
<dbReference type="PDBsum" id="6ZME"/>
<dbReference type="PDBsum" id="6ZMI"/>
<dbReference type="PDBsum" id="6ZMO"/>
<dbReference type="PDBsum" id="7BHP"/>
<dbReference type="PDBsum" id="7F5S"/>
<dbReference type="PDBsum" id="7OW7"/>
<dbReference type="PDBsum" id="7QVP"/>
<dbReference type="PDBsum" id="7XNY"/>
<dbReference type="PDBsum" id="8A3D"/>
<dbReference type="PDBsum" id="8FKP"/>
<dbReference type="PDBsum" id="8FKQ"/>
<dbReference type="PDBsum" id="8FKR"/>
<dbReference type="PDBsum" id="8FKS"/>
<dbReference type="PDBsum" id="8FKT"/>
<dbReference type="PDBsum" id="8FKU"/>
<dbReference type="PDBsum" id="8FKV"/>
<dbReference type="PDBsum" id="8FKW"/>
<dbReference type="PDBsum" id="8FKX"/>
<dbReference type="PDBsum" id="8FKY"/>
<dbReference type="PDBsum" id="8FKZ"/>
<dbReference type="PDBsum" id="8FL2"/>
<dbReference type="PDBsum" id="8FL3"/>
<dbReference type="PDBsum" id="8FL4"/>
<dbReference type="PDBsum" id="8FL6"/>
<dbReference type="PDBsum" id="8FL7"/>
<dbReference type="PDBsum" id="8FL9"/>
<dbReference type="PDBsum" id="8FLA"/>
<dbReference type="PDBsum" id="8FLB"/>
<dbReference type="PDBsum" id="8FLC"/>
<dbReference type="PDBsum" id="8FLD"/>
<dbReference type="PDBsum" id="8FLE"/>
<dbReference type="PDBsum" id="8FLF"/>
<dbReference type="PDBsum" id="8G5Y"/>
<dbReference type="PDBsum" id="8G5Z"/>
<dbReference type="PDBsum" id="8G60"/>
<dbReference type="PDBsum" id="8G61"/>
<dbReference type="PDBsum" id="8G6J"/>
<dbReference type="PDBsum" id="8GLP"/>
<dbReference type="PDBsum" id="8IDT"/>
<dbReference type="PDBsum" id="8IDY"/>
<dbReference type="PDBsum" id="8IE3"/>
<dbReference type="PDBsum" id="8IFD"/>
<dbReference type="PDBsum" id="8IFE"/>
<dbReference type="PDBsum" id="8INE"/>
<dbReference type="PDBsum" id="8INF"/>
<dbReference type="PDBsum" id="8INK"/>
<dbReference type="PDBsum" id="8IPD"/>
<dbReference type="PDBsum" id="8IPX"/>
<dbReference type="PDBsum" id="8IPY"/>
<dbReference type="PDBsum" id="8IR1"/>
<dbReference type="PDBsum" id="8IR3"/>
<dbReference type="PDBsum" id="8JDJ"/>
<dbReference type="PDBsum" id="8JDK"/>
<dbReference type="PDBsum" id="8JDL"/>
<dbReference type="PDBsum" id="8JDM"/>
<dbReference type="PDBsum" id="8K2C"/>
<dbReference type="PDBsum" id="8OHD"/>
<dbReference type="PDBsum" id="8OJ0"/>
<dbReference type="PDBsum" id="8OJ5"/>
<dbReference type="PDBsum" id="8OJ8"/>
<dbReference type="PDBsum" id="8QFD"/>
<dbReference type="PDBsum" id="8QOI"/>
<dbReference type="PDBsum" id="8QYX"/>
<dbReference type="PDBsum" id="8RL2"/>
<dbReference type="PDBsum" id="8UKB"/>
<dbReference type="PDBsum" id="8XSX"/>
<dbReference type="PDBsum" id="8XSY"/>
<dbReference type="PDBsum" id="8XSZ"/>
<dbReference type="PDBsum" id="8Y0W"/>
<dbReference type="PDBsum" id="8Y0X"/>
<dbReference type="PDBsum" id="8YOO"/>
<dbReference type="PDBsum" id="8YOP"/>
<dbReference type="PDBsum" id="9C3H"/>
<dbReference type="PDBsum" id="9G8M"/>
<dbReference type="PDBsum" id="9GMO"/>
<dbReference type="EMDB" id="EMD-0948"/>
<dbReference type="EMDB" id="EMD-0963"/>
<dbReference type="EMDB" id="EMD-0964"/>
<dbReference type="EMDB" id="EMD-0978"/>
<dbReference type="EMDB" id="EMD-10668"/>
<dbReference type="EMDB" id="EMD-10674"/>
<dbReference type="EMDB" id="EMD-10690"/>
<dbReference type="EMDB" id="EMD-10709"/>
<dbReference type="EMDB" id="EMD-11098"/>
<dbReference type="EMDB" id="EMD-11099"/>
<dbReference type="EMDB" id="EMD-11100"/>
<dbReference type="EMDB" id="EMD-11288"/>
<dbReference type="EMDB" id="EMD-11289"/>
<dbReference type="EMDB" id="EMD-11292"/>
<dbReference type="EMDB" id="EMD-11299"/>
<dbReference type="EMDB" id="EMD-12189"/>
<dbReference type="EMDB" id="EMD-13094"/>
<dbReference type="EMDB" id="EMD-14181"/>
<dbReference type="EMDB" id="EMD-15113"/>
<dbReference type="EMDB" id="EMD-16880"/>
<dbReference type="EMDB" id="EMD-16902"/>
<dbReference type="EMDB" id="EMD-16905"/>
<dbReference type="EMDB" id="EMD-16908"/>
<dbReference type="EMDB" id="EMD-18382"/>
<dbReference type="EMDB" id="EMD-18539"/>
<dbReference type="EMDB" id="EMD-18765"/>
<dbReference type="EMDB" id="EMD-19330"/>
<dbReference type="EMDB" id="EMD-29252"/>
<dbReference type="EMDB" id="EMD-29253"/>
<dbReference type="EMDB" id="EMD-29254"/>
<dbReference type="EMDB" id="EMD-29255"/>
<dbReference type="EMDB" id="EMD-29256"/>
<dbReference type="EMDB" id="EMD-29257"/>
<dbReference type="EMDB" id="EMD-29258"/>
<dbReference type="EMDB" id="EMD-29259"/>
<dbReference type="EMDB" id="EMD-29260"/>
<dbReference type="EMDB" id="EMD-29261"/>
<dbReference type="EMDB" id="EMD-29262"/>
<dbReference type="EMDB" id="EMD-29265"/>
<dbReference type="EMDB" id="EMD-29266"/>
<dbReference type="EMDB" id="EMD-29267"/>
<dbReference type="EMDB" id="EMD-29268"/>
<dbReference type="EMDB" id="EMD-29269"/>
<dbReference type="EMDB" id="EMD-29271"/>
<dbReference type="EMDB" id="EMD-29272"/>
<dbReference type="EMDB" id="EMD-29273"/>
<dbReference type="EMDB" id="EMD-29274"/>
<dbReference type="EMDB" id="EMD-29275"/>
<dbReference type="EMDB" id="EMD-29276"/>
<dbReference type="EMDB" id="EMD-29277"/>
<dbReference type="EMDB" id="EMD-29757"/>
<dbReference type="EMDB" id="EMD-29758"/>
<dbReference type="EMDB" id="EMD-29759"/>
<dbReference type="EMDB" id="EMD-29760"/>
<dbReference type="EMDB" id="EMD-29771"/>
<dbReference type="EMDB" id="EMD-31465"/>
<dbReference type="EMDB" id="EMD-33330"/>
<dbReference type="EMDB" id="EMD-35370"/>
<dbReference type="EMDB" id="EMD-35371"/>
<dbReference type="EMDB" id="EMD-35375"/>
<dbReference type="EMDB" id="EMD-35413"/>
<dbReference type="EMDB" id="EMD-35414"/>
<dbReference type="EMDB" id="EMD-35596"/>
<dbReference type="EMDB" id="EMD-35597"/>
<dbReference type="EMDB" id="EMD-35599"/>
<dbReference type="EMDB" id="EMD-35639"/>
<dbReference type="EMDB" id="EMD-35649"/>
<dbReference type="EMDB" id="EMD-35651"/>
<dbReference type="EMDB" id="EMD-35672"/>
<dbReference type="EMDB" id="EMD-35673"/>
<dbReference type="EMDB" id="EMD-36178"/>
<dbReference type="EMDB" id="EMD-36179"/>
<dbReference type="EMDB" id="EMD-36180"/>
<dbReference type="EMDB" id="EMD-36181"/>
<dbReference type="EMDB" id="EMD-36838"/>
<dbReference type="EMDB" id="EMD-38629"/>
<dbReference type="EMDB" id="EMD-38630"/>
<dbReference type="EMDB" id="EMD-38631"/>
<dbReference type="EMDB" id="EMD-3883"/>
<dbReference type="EMDB" id="EMD-39455"/>
<dbReference type="EMDB" id="EMD-39456"/>
<dbReference type="EMDB" id="EMD-40205"/>
<dbReference type="EMDB" id="EMD-4070"/>
<dbReference type="EMDB" id="EMD-42351"/>
<dbReference type="EMDB" id="EMD-45170"/>
<dbReference type="EMDB" id="EMD-51132"/>
<dbReference type="EMDB" id="EMD-51452"/>
<dbReference type="EMDB" id="EMD-9701"/>
<dbReference type="EMDB" id="EMD-9702"/>
<dbReference type="EMDB" id="EMD-9703"/>
<dbReference type="SMR" id="P46776"/>
<dbReference type="BioGRID" id="112076">
    <property type="interactions" value="492"/>
</dbReference>
<dbReference type="ComplexPortal" id="CPX-5183">
    <property type="entry name" value="60S cytosolic large ribosomal subunit"/>
</dbReference>
<dbReference type="ComplexPortal" id="CPX-7664">
    <property type="entry name" value="60S cytosolic large ribosomal subunit, testis-specific variant"/>
</dbReference>
<dbReference type="ComplexPortal" id="CPX-7665">
    <property type="entry name" value="60S cytosolic large ribosomal subunit, striated muscle variant"/>
</dbReference>
<dbReference type="CORUM" id="P46776"/>
<dbReference type="DIP" id="DIP-33121N"/>
<dbReference type="FunCoup" id="P46776">
    <property type="interactions" value="2118"/>
</dbReference>
<dbReference type="IntAct" id="P46776">
    <property type="interactions" value="223"/>
</dbReference>
<dbReference type="MINT" id="P46776"/>
<dbReference type="STRING" id="9606.ENSP00000346015"/>
<dbReference type="GlyGen" id="P46776">
    <property type="glycosylation" value="3 sites, 2 N-linked glycans (2 sites), 1 O-linked glycan (1 site)"/>
</dbReference>
<dbReference type="iPTMnet" id="P46776"/>
<dbReference type="PhosphoSitePlus" id="P46776"/>
<dbReference type="SwissPalm" id="P46776"/>
<dbReference type="BioMuta" id="RPL27A"/>
<dbReference type="jPOST" id="P46776"/>
<dbReference type="MassIVE" id="P46776"/>
<dbReference type="PaxDb" id="9606-ENSP00000346015"/>
<dbReference type="PeptideAtlas" id="P46776"/>
<dbReference type="ProteomicsDB" id="55758"/>
<dbReference type="Pumba" id="P46776"/>
<dbReference type="TopDownProteomics" id="P46776"/>
<dbReference type="Antibodypedia" id="24122">
    <property type="antibodies" value="170 antibodies from 29 providers"/>
</dbReference>
<dbReference type="DNASU" id="6157"/>
<dbReference type="Ensembl" id="ENST00000314138.11">
    <property type="protein sequence ID" value="ENSP00000346015.5"/>
    <property type="gene ID" value="ENSG00000166441.13"/>
</dbReference>
<dbReference type="GeneID" id="6157"/>
<dbReference type="KEGG" id="hsa:6157"/>
<dbReference type="MANE-Select" id="ENST00000314138.11">
    <property type="protein sequence ID" value="ENSP00000346015.5"/>
    <property type="RefSeq nucleotide sequence ID" value="NM_000990.5"/>
    <property type="RefSeq protein sequence ID" value="NP_000981.1"/>
</dbReference>
<dbReference type="UCSC" id="uc001mgs.5">
    <property type="organism name" value="human"/>
</dbReference>
<dbReference type="AGR" id="HGNC:10329"/>
<dbReference type="CTD" id="6157"/>
<dbReference type="DisGeNET" id="6157"/>
<dbReference type="GeneCards" id="RPL27A"/>
<dbReference type="HGNC" id="HGNC:10329">
    <property type="gene designation" value="RPL27A"/>
</dbReference>
<dbReference type="HPA" id="ENSG00000166441">
    <property type="expression patterns" value="Low tissue specificity"/>
</dbReference>
<dbReference type="MIM" id="603637">
    <property type="type" value="gene"/>
</dbReference>
<dbReference type="neXtProt" id="NX_P46776"/>
<dbReference type="OpenTargets" id="ENSG00000166441"/>
<dbReference type="PharmGKB" id="PA34708"/>
<dbReference type="VEuPathDB" id="HostDB:ENSG00000166441"/>
<dbReference type="eggNOG" id="KOG1742">
    <property type="taxonomic scope" value="Eukaryota"/>
</dbReference>
<dbReference type="GeneTree" id="ENSGT00390000005534"/>
<dbReference type="HOGENOM" id="CLU_109163_1_0_1"/>
<dbReference type="InParanoid" id="P46776"/>
<dbReference type="OMA" id="WGRVGQH"/>
<dbReference type="OrthoDB" id="61900at2759"/>
<dbReference type="PAN-GO" id="P46776">
    <property type="GO annotations" value="2 GO annotations based on evolutionary models"/>
</dbReference>
<dbReference type="PhylomeDB" id="P46776"/>
<dbReference type="TreeFam" id="TF313742"/>
<dbReference type="PathwayCommons" id="P46776"/>
<dbReference type="Reactome" id="R-HSA-156827">
    <property type="pathway name" value="L13a-mediated translational silencing of Ceruloplasmin expression"/>
</dbReference>
<dbReference type="Reactome" id="R-HSA-156902">
    <property type="pathway name" value="Peptide chain elongation"/>
</dbReference>
<dbReference type="Reactome" id="R-HSA-1799339">
    <property type="pathway name" value="SRP-dependent cotranslational protein targeting to membrane"/>
</dbReference>
<dbReference type="Reactome" id="R-HSA-192823">
    <property type="pathway name" value="Viral mRNA Translation"/>
</dbReference>
<dbReference type="Reactome" id="R-HSA-2408557">
    <property type="pathway name" value="Selenocysteine synthesis"/>
</dbReference>
<dbReference type="Reactome" id="R-HSA-6791226">
    <property type="pathway name" value="Major pathway of rRNA processing in the nucleolus and cytosol"/>
</dbReference>
<dbReference type="Reactome" id="R-HSA-72689">
    <property type="pathway name" value="Formation of a pool of free 40S subunits"/>
</dbReference>
<dbReference type="Reactome" id="R-HSA-72706">
    <property type="pathway name" value="GTP hydrolysis and joining of the 60S ribosomal subunit"/>
</dbReference>
<dbReference type="Reactome" id="R-HSA-72764">
    <property type="pathway name" value="Eukaryotic Translation Termination"/>
</dbReference>
<dbReference type="Reactome" id="R-HSA-9010553">
    <property type="pathway name" value="Regulation of expression of SLITs and ROBOs"/>
</dbReference>
<dbReference type="Reactome" id="R-HSA-9629569">
    <property type="pathway name" value="Protein hydroxylation"/>
</dbReference>
<dbReference type="Reactome" id="R-HSA-9633012">
    <property type="pathway name" value="Response of EIF2AK4 (GCN2) to amino acid deficiency"/>
</dbReference>
<dbReference type="Reactome" id="R-HSA-975956">
    <property type="pathway name" value="Nonsense Mediated Decay (NMD) independent of the Exon Junction Complex (EJC)"/>
</dbReference>
<dbReference type="Reactome" id="R-HSA-975957">
    <property type="pathway name" value="Nonsense Mediated Decay (NMD) enhanced by the Exon Junction Complex (EJC)"/>
</dbReference>
<dbReference type="SignaLink" id="P46776"/>
<dbReference type="SIGNOR" id="P46776"/>
<dbReference type="BioGRID-ORCS" id="6157">
    <property type="hits" value="835 hits in 1173 CRISPR screens"/>
</dbReference>
<dbReference type="CD-CODE" id="91857CE7">
    <property type="entry name" value="Nucleolus"/>
</dbReference>
<dbReference type="ChiTaRS" id="RPL27A">
    <property type="organism name" value="human"/>
</dbReference>
<dbReference type="EvolutionaryTrace" id="P46776"/>
<dbReference type="GeneWiki" id="RPL27A"/>
<dbReference type="GenomeRNAi" id="6157"/>
<dbReference type="Pharos" id="P46776">
    <property type="development level" value="Tbio"/>
</dbReference>
<dbReference type="PRO" id="PR:P46776"/>
<dbReference type="Proteomes" id="UP000005640">
    <property type="component" value="Chromosome 11"/>
</dbReference>
<dbReference type="RNAct" id="P46776">
    <property type="molecule type" value="protein"/>
</dbReference>
<dbReference type="Bgee" id="ENSG00000166441">
    <property type="expression patterns" value="Expressed in ganglionic eminence and 116 other cell types or tissues"/>
</dbReference>
<dbReference type="ExpressionAtlas" id="P46776">
    <property type="expression patterns" value="baseline and differential"/>
</dbReference>
<dbReference type="GO" id="GO:0005737">
    <property type="term" value="C:cytoplasm"/>
    <property type="evidence" value="ECO:0000303"/>
    <property type="project" value="ComplexPortal"/>
</dbReference>
<dbReference type="GO" id="GO:0005829">
    <property type="term" value="C:cytosol"/>
    <property type="evidence" value="ECO:0000314"/>
    <property type="project" value="HPA"/>
</dbReference>
<dbReference type="GO" id="GO:0022625">
    <property type="term" value="C:cytosolic large ribosomal subunit"/>
    <property type="evidence" value="ECO:0000314"/>
    <property type="project" value="UniProtKB"/>
</dbReference>
<dbReference type="GO" id="GO:0022626">
    <property type="term" value="C:cytosolic ribosome"/>
    <property type="evidence" value="ECO:0000314"/>
    <property type="project" value="FlyBase"/>
</dbReference>
<dbReference type="GO" id="GO:0005783">
    <property type="term" value="C:endoplasmic reticulum"/>
    <property type="evidence" value="ECO:0000314"/>
    <property type="project" value="HPA"/>
</dbReference>
<dbReference type="GO" id="GO:0016020">
    <property type="term" value="C:membrane"/>
    <property type="evidence" value="ECO:0007005"/>
    <property type="project" value="UniProtKB"/>
</dbReference>
<dbReference type="GO" id="GO:0005654">
    <property type="term" value="C:nucleoplasm"/>
    <property type="evidence" value="ECO:0000304"/>
    <property type="project" value="Reactome"/>
</dbReference>
<dbReference type="GO" id="GO:0045202">
    <property type="term" value="C:synapse"/>
    <property type="evidence" value="ECO:0007669"/>
    <property type="project" value="Ensembl"/>
</dbReference>
<dbReference type="GO" id="GO:0003723">
    <property type="term" value="F:RNA binding"/>
    <property type="evidence" value="ECO:0007005"/>
    <property type="project" value="UniProtKB"/>
</dbReference>
<dbReference type="GO" id="GO:0003735">
    <property type="term" value="F:structural constituent of ribosome"/>
    <property type="evidence" value="ECO:0000314"/>
    <property type="project" value="UniProtKB"/>
</dbReference>
<dbReference type="GO" id="GO:0002181">
    <property type="term" value="P:cytoplasmic translation"/>
    <property type="evidence" value="ECO:0000303"/>
    <property type="project" value="ComplexPortal"/>
</dbReference>
<dbReference type="GO" id="GO:0006412">
    <property type="term" value="P:translation"/>
    <property type="evidence" value="ECO:0000304"/>
    <property type="project" value="ProtInc"/>
</dbReference>
<dbReference type="FunFam" id="3.100.10.10:FF:000024">
    <property type="entry name" value="RPL27A isoform 10"/>
    <property type="match status" value="1"/>
</dbReference>
<dbReference type="Gene3D" id="3.100.10.10">
    <property type="match status" value="1"/>
</dbReference>
<dbReference type="Gene3D" id="4.10.990.10">
    <property type="match status" value="1"/>
</dbReference>
<dbReference type="HAMAP" id="MF_01341">
    <property type="entry name" value="Ribosomal_uL15"/>
    <property type="match status" value="1"/>
</dbReference>
<dbReference type="InterPro" id="IPR027386">
    <property type="entry name" value="Rbsml_uL15_N"/>
</dbReference>
<dbReference type="InterPro" id="IPR030878">
    <property type="entry name" value="Ribosomal_uL15"/>
</dbReference>
<dbReference type="InterPro" id="IPR021131">
    <property type="entry name" value="Ribosomal_uL15/eL18"/>
</dbReference>
<dbReference type="InterPro" id="IPR036227">
    <property type="entry name" value="Ribosomal_uL15/eL18_sf"/>
</dbReference>
<dbReference type="InterPro" id="IPR001196">
    <property type="entry name" value="Ribosomal_uL15_CS"/>
</dbReference>
<dbReference type="PANTHER" id="PTHR11721">
    <property type="entry name" value="60S RIBOSOMAL PROTEIN L27A"/>
    <property type="match status" value="1"/>
</dbReference>
<dbReference type="PANTHER" id="PTHR11721:SF27">
    <property type="entry name" value="LARGE RIBOSOMAL SUBUNIT PROTEIN UL15"/>
    <property type="match status" value="1"/>
</dbReference>
<dbReference type="Pfam" id="PF00828">
    <property type="entry name" value="Ribosomal_L27A"/>
    <property type="match status" value="1"/>
</dbReference>
<dbReference type="SUPFAM" id="SSF52080">
    <property type="entry name" value="Ribosomal proteins L15p and L18e"/>
    <property type="match status" value="1"/>
</dbReference>
<dbReference type="PROSITE" id="PS00475">
    <property type="entry name" value="RIBOSOMAL_L15"/>
    <property type="match status" value="1"/>
</dbReference>
<feature type="chain" id="PRO_0000104879" description="Large ribosomal subunit protein uL15">
    <location>
        <begin position="1"/>
        <end position="148"/>
    </location>
</feature>
<feature type="region of interest" description="Disordered" evidence="1">
    <location>
        <begin position="1"/>
        <end position="38"/>
    </location>
</feature>
<feature type="compositionally biased region" description="Basic residues" evidence="1">
    <location>
        <begin position="1"/>
        <end position="30"/>
    </location>
</feature>
<feature type="modified residue" description="(3S)-3-hydroxyhistidine" evidence="2">
    <location>
        <position position="39"/>
    </location>
</feature>
<feature type="modified residue" description="N6-acetyllysine" evidence="13">
    <location>
        <position position="47"/>
    </location>
</feature>
<feature type="modified residue" description="N6-acetyllysine" evidence="13">
    <location>
        <position position="55"/>
    </location>
</feature>
<feature type="modified residue" description="Phosphoserine" evidence="11 12 14">
    <location>
        <position position="68"/>
    </location>
</feature>
<feature type="modified residue" description="N6-acetyllysine" evidence="13">
    <location>
        <position position="110"/>
    </location>
</feature>
<accession>P46776</accession>
<accession>B2R4B3</accession>
<comment type="function">
    <text evidence="3 4">Component of the large ribosomal subunit (PubMed:23636399, PubMed:32669547). The ribosome is a large ribonucleoprotein complex responsible for the synthesis of proteins in the cell (PubMed:23636399, PubMed:32669547).</text>
</comment>
<comment type="subunit">
    <text evidence="3 4">Component of the large ribosomal subunit.</text>
</comment>
<comment type="interaction">
    <interactant intactId="EBI-350581">
        <id>P46776</id>
    </interactant>
    <interactant intactId="EBI-456077">
        <id>Q86VP6</id>
        <label>CAND1</label>
    </interactant>
    <organismsDiffer>false</organismsDiffer>
    <experiments>2</experiments>
</comment>
<comment type="interaction">
    <interactant intactId="EBI-350581">
        <id>P46776</id>
    </interactant>
    <interactant intactId="EBI-1030560">
        <id>P13984</id>
        <label>GTF2F2</label>
    </interactant>
    <organismsDiffer>false</organismsDiffer>
    <experiments>2</experiments>
</comment>
<comment type="subcellular location">
    <subcellularLocation>
        <location evidence="3">Cytoplasm</location>
    </subcellularLocation>
</comment>
<comment type="PTM">
    <text evidence="2">Hydroxylated on His-39 by MINA.</text>
</comment>
<comment type="similarity">
    <text evidence="6">Belongs to the universal ribosomal protein uL15 family.</text>
</comment>
<organism>
    <name type="scientific">Homo sapiens</name>
    <name type="common">Human</name>
    <dbReference type="NCBI Taxonomy" id="9606"/>
    <lineage>
        <taxon>Eukaryota</taxon>
        <taxon>Metazoa</taxon>
        <taxon>Chordata</taxon>
        <taxon>Craniata</taxon>
        <taxon>Vertebrata</taxon>
        <taxon>Euteleostomi</taxon>
        <taxon>Mammalia</taxon>
        <taxon>Eutheria</taxon>
        <taxon>Euarchontoglires</taxon>
        <taxon>Primates</taxon>
        <taxon>Haplorrhini</taxon>
        <taxon>Catarrhini</taxon>
        <taxon>Hominidae</taxon>
        <taxon>Homo</taxon>
    </lineage>
</organism>
<gene>
    <name type="primary">RPL27A</name>
</gene>